<name>WECF_SALPC</name>
<organism>
    <name type="scientific">Salmonella paratyphi C (strain RKS4594)</name>
    <dbReference type="NCBI Taxonomy" id="476213"/>
    <lineage>
        <taxon>Bacteria</taxon>
        <taxon>Pseudomonadati</taxon>
        <taxon>Pseudomonadota</taxon>
        <taxon>Gammaproteobacteria</taxon>
        <taxon>Enterobacterales</taxon>
        <taxon>Enterobacteriaceae</taxon>
        <taxon>Salmonella</taxon>
    </lineage>
</organism>
<dbReference type="EC" id="2.4.1.325" evidence="1"/>
<dbReference type="EMBL" id="CP000857">
    <property type="protein sequence ID" value="ACN48108.1"/>
    <property type="molecule type" value="Genomic_DNA"/>
</dbReference>
<dbReference type="RefSeq" id="WP_000217180.1">
    <property type="nucleotide sequence ID" value="NC_012125.1"/>
</dbReference>
<dbReference type="CAZy" id="GT56">
    <property type="family name" value="Glycosyltransferase Family 56"/>
</dbReference>
<dbReference type="KEGG" id="sei:SPC_4041"/>
<dbReference type="HOGENOM" id="CLU_066584_0_0_6"/>
<dbReference type="UniPathway" id="UPA00566"/>
<dbReference type="Proteomes" id="UP000001599">
    <property type="component" value="Chromosome"/>
</dbReference>
<dbReference type="GO" id="GO:0005886">
    <property type="term" value="C:plasma membrane"/>
    <property type="evidence" value="ECO:0007669"/>
    <property type="project" value="UniProtKB-SubCell"/>
</dbReference>
<dbReference type="GO" id="GO:0102031">
    <property type="term" value="F:4-acetamido-4,6-dideoxy-D-galactose transferase activity"/>
    <property type="evidence" value="ECO:0007669"/>
    <property type="project" value="UniProtKB-EC"/>
</dbReference>
<dbReference type="GO" id="GO:0008417">
    <property type="term" value="F:fucosyltransferase activity"/>
    <property type="evidence" value="ECO:0007669"/>
    <property type="project" value="InterPro"/>
</dbReference>
<dbReference type="GO" id="GO:0009246">
    <property type="term" value="P:enterobacterial common antigen biosynthetic process"/>
    <property type="evidence" value="ECO:0007669"/>
    <property type="project" value="UniProtKB-UniRule"/>
</dbReference>
<dbReference type="GO" id="GO:0036065">
    <property type="term" value="P:fucosylation"/>
    <property type="evidence" value="ECO:0007669"/>
    <property type="project" value="InterPro"/>
</dbReference>
<dbReference type="HAMAP" id="MF_01002">
    <property type="entry name" value="WecF_RffT"/>
    <property type="match status" value="1"/>
</dbReference>
<dbReference type="InterPro" id="IPR009993">
    <property type="entry name" value="WecF"/>
</dbReference>
<dbReference type="NCBIfam" id="NF002753">
    <property type="entry name" value="PRK02797.1-2"/>
    <property type="match status" value="1"/>
</dbReference>
<dbReference type="NCBIfam" id="NF002754">
    <property type="entry name" value="PRK02797.1-3"/>
    <property type="match status" value="1"/>
</dbReference>
<dbReference type="Pfam" id="PF07429">
    <property type="entry name" value="Glyco_transf_56"/>
    <property type="match status" value="1"/>
</dbReference>
<gene>
    <name evidence="1" type="primary">wecF</name>
    <name evidence="1" type="synonym">rffT</name>
    <name type="ordered locus">SPC_4041</name>
</gene>
<accession>C0Q3A6</accession>
<feature type="chain" id="PRO_1000148786" description="TDP-N-acetylfucosamine:lipid II N-acetylfucosaminyltransferase">
    <location>
        <begin position="1"/>
        <end position="359"/>
    </location>
</feature>
<protein>
    <recommendedName>
        <fullName evidence="1">TDP-N-acetylfucosamine:lipid II N-acetylfucosaminyltransferase</fullName>
        <ecNumber evidence="1">2.4.1.325</ecNumber>
    </recommendedName>
    <alternativeName>
        <fullName evidence="1">4-alpha-L-fucosyltransferase</fullName>
    </alternativeName>
    <alternativeName>
        <fullName evidence="1">TDP-Fuc4NAc:lipid II Fuc4NAc transferase</fullName>
        <shortName evidence="1">Fuc4NAc transferase</shortName>
    </alternativeName>
</protein>
<keyword id="KW-0997">Cell inner membrane</keyword>
<keyword id="KW-1003">Cell membrane</keyword>
<keyword id="KW-0328">Glycosyltransferase</keyword>
<keyword id="KW-0472">Membrane</keyword>
<keyword id="KW-0808">Transferase</keyword>
<comment type="function">
    <text evidence="1">Catalyzes the synthesis of Und-PP-GlcNAc-ManNAcA-Fuc4NAc (Lipid III), the third lipid-linked intermediate involved in ECA synthesis.</text>
</comment>
<comment type="catalytic activity">
    <reaction evidence="1">
        <text>beta-D-ManNAcA-(1-&gt;4)-alpha-D-GlcNAc-di-trans,octa-cis-undecaprenyl diphosphate + dTDP-4-acetamido-4,6-dideoxy-alpha-D-galactose = alpha-D-FucNAc4-(1-&gt;4)-beta-D-ManNAcA-(1-&gt;4)-D-GlcNAc-undecaprenyl diphosphate + dTDP + H(+)</text>
        <dbReference type="Rhea" id="RHEA:28759"/>
        <dbReference type="ChEBI" id="CHEBI:15378"/>
        <dbReference type="ChEBI" id="CHEBI:58369"/>
        <dbReference type="ChEBI" id="CHEBI:61495"/>
        <dbReference type="ChEBI" id="CHEBI:61496"/>
        <dbReference type="ChEBI" id="CHEBI:68493"/>
        <dbReference type="EC" id="2.4.1.325"/>
    </reaction>
</comment>
<comment type="pathway">
    <text evidence="1">Bacterial outer membrane biogenesis; enterobacterial common antigen biosynthesis.</text>
</comment>
<comment type="subcellular location">
    <subcellularLocation>
        <location evidence="1">Cell inner membrane</location>
        <topology evidence="1">Peripheral membrane protein</topology>
    </subcellularLocation>
</comment>
<comment type="similarity">
    <text evidence="1">Belongs to the glycosyltransferase 56 family.</text>
</comment>
<proteinExistence type="inferred from homology"/>
<reference key="1">
    <citation type="journal article" date="2009" name="PLoS ONE">
        <title>Salmonella paratyphi C: genetic divergence from Salmonella choleraesuis and pathogenic convergence with Salmonella typhi.</title>
        <authorList>
            <person name="Liu W.-Q."/>
            <person name="Feng Y."/>
            <person name="Wang Y."/>
            <person name="Zou Q.-H."/>
            <person name="Chen F."/>
            <person name="Guo J.-T."/>
            <person name="Peng Y.-H."/>
            <person name="Jin Y."/>
            <person name="Li Y.-G."/>
            <person name="Hu S.-N."/>
            <person name="Johnston R.N."/>
            <person name="Liu G.-R."/>
            <person name="Liu S.-L."/>
        </authorList>
    </citation>
    <scope>NUCLEOTIDE SEQUENCE [LARGE SCALE GENOMIC DNA]</scope>
    <source>
        <strain>RKS4594</strain>
    </source>
</reference>
<sequence>MTVLIHVLGSDIPHHNHTVLRFFNDTLAATSEHAREFMVAGEDNGFTESCPALSLHFYGSKKVLAQAVIAKAKANRRQRFFFHGQFNTSLWLALLSGGIKPAQFYWHIWGADLYEVSHGLKFRLFYPLRRIAQGRVGGVFATRGDLSYFARQHPGVRGELLYFPTRMDPSLNAMAKERQRAGKLTILVGNSGDRSNQHIAALRAVYQQFGDTVNVVVPMGYPANNQAYIDEVRQAGLALFSAENLQILSEKMEFDAYLALLRQCDLGYFIFARQQGIGTLCLLIQADIPCVLNRDNPFWQDMAEQHLPVLFTTDDLNEQVVREAQRQLASVDKSGITFFSPNYLQPWHNALRIAAGEAE</sequence>
<evidence type="ECO:0000255" key="1">
    <source>
        <dbReference type="HAMAP-Rule" id="MF_01002"/>
    </source>
</evidence>